<feature type="chain" id="PRO_0000381202" description="Biotin synthase">
    <location>
        <begin position="1"/>
        <end position="335"/>
    </location>
</feature>
<feature type="domain" description="Radical SAM core" evidence="2">
    <location>
        <begin position="41"/>
        <end position="269"/>
    </location>
</feature>
<feature type="binding site" evidence="1">
    <location>
        <position position="56"/>
    </location>
    <ligand>
        <name>[4Fe-4S] cluster</name>
        <dbReference type="ChEBI" id="CHEBI:49883"/>
        <note>4Fe-4S-S-AdoMet</note>
    </ligand>
</feature>
<feature type="binding site" evidence="1">
    <location>
        <position position="60"/>
    </location>
    <ligand>
        <name>[4Fe-4S] cluster</name>
        <dbReference type="ChEBI" id="CHEBI:49883"/>
        <note>4Fe-4S-S-AdoMet</note>
    </ligand>
</feature>
<feature type="binding site" evidence="1">
    <location>
        <position position="63"/>
    </location>
    <ligand>
        <name>[4Fe-4S] cluster</name>
        <dbReference type="ChEBI" id="CHEBI:49883"/>
        <note>4Fe-4S-S-AdoMet</note>
    </ligand>
</feature>
<feature type="binding site" evidence="1">
    <location>
        <position position="100"/>
    </location>
    <ligand>
        <name>[2Fe-2S] cluster</name>
        <dbReference type="ChEBI" id="CHEBI:190135"/>
    </ligand>
</feature>
<feature type="binding site" evidence="1">
    <location>
        <position position="132"/>
    </location>
    <ligand>
        <name>[2Fe-2S] cluster</name>
        <dbReference type="ChEBI" id="CHEBI:190135"/>
    </ligand>
</feature>
<feature type="binding site" evidence="1">
    <location>
        <position position="192"/>
    </location>
    <ligand>
        <name>[2Fe-2S] cluster</name>
        <dbReference type="ChEBI" id="CHEBI:190135"/>
    </ligand>
</feature>
<feature type="binding site" evidence="1">
    <location>
        <position position="264"/>
    </location>
    <ligand>
        <name>[2Fe-2S] cluster</name>
        <dbReference type="ChEBI" id="CHEBI:190135"/>
    </ligand>
</feature>
<name>BIOB_NOSS1</name>
<proteinExistence type="inferred from homology"/>
<organism>
    <name type="scientific">Nostoc sp. (strain PCC 7120 / SAG 25.82 / UTEX 2576)</name>
    <dbReference type="NCBI Taxonomy" id="103690"/>
    <lineage>
        <taxon>Bacteria</taxon>
        <taxon>Bacillati</taxon>
        <taxon>Cyanobacteriota</taxon>
        <taxon>Cyanophyceae</taxon>
        <taxon>Nostocales</taxon>
        <taxon>Nostocaceae</taxon>
        <taxon>Nostoc</taxon>
    </lineage>
</organism>
<protein>
    <recommendedName>
        <fullName evidence="1">Biotin synthase</fullName>
        <ecNumber evidence="1">2.8.1.6</ecNumber>
    </recommendedName>
</protein>
<sequence>MSVGRIRYDWHKAEIRAVYDTPLLELIYQAASVHRQFHNPKQIQVCKLISIKTGACPEDCSYCAQSSRYQTEVKPQALLDKQTVVEIAQNAKQKGVSRVCMGAAWREVRDNSQFDRVLEMVKDVTDMGLEVCCTLGMLTSEQAKKLETAGLYAYNHNLDTSSDYYSTIITTRTYGDRLNTIENVRQTNVTVCSGGILGLGESIDDRVAMLQTLATLNPHPESVPINILSQVEGTPLEDQPDVPVWDVVRMIATARIVMPTSDVRLSAGRARLSQVEQAFCFMAGANSIFSSDDNKMLTVTTPCPDYDADQEMLNLLGLEMRPPSQRPQPVVMGNS</sequence>
<keyword id="KW-0001">2Fe-2S</keyword>
<keyword id="KW-0004">4Fe-4S</keyword>
<keyword id="KW-0093">Biotin biosynthesis</keyword>
<keyword id="KW-0408">Iron</keyword>
<keyword id="KW-0411">Iron-sulfur</keyword>
<keyword id="KW-0479">Metal-binding</keyword>
<keyword id="KW-1185">Reference proteome</keyword>
<keyword id="KW-0949">S-adenosyl-L-methionine</keyword>
<keyword id="KW-0808">Transferase</keyword>
<dbReference type="EC" id="2.8.1.6" evidence="1"/>
<dbReference type="EMBL" id="BA000019">
    <property type="protein sequence ID" value="BAB73620.1"/>
    <property type="molecule type" value="Genomic_DNA"/>
</dbReference>
<dbReference type="PIR" id="AC2046">
    <property type="entry name" value="AC2046"/>
</dbReference>
<dbReference type="RefSeq" id="WP_010996085.1">
    <property type="nucleotide sequence ID" value="NZ_RSCN01000031.1"/>
</dbReference>
<dbReference type="SMR" id="Q8YVQ3"/>
<dbReference type="STRING" id="103690.gene:10493940"/>
<dbReference type="KEGG" id="ana:alr1921"/>
<dbReference type="eggNOG" id="COG0502">
    <property type="taxonomic scope" value="Bacteria"/>
</dbReference>
<dbReference type="OrthoDB" id="9786826at2"/>
<dbReference type="UniPathway" id="UPA00078">
    <property type="reaction ID" value="UER00162"/>
</dbReference>
<dbReference type="Proteomes" id="UP000002483">
    <property type="component" value="Chromosome"/>
</dbReference>
<dbReference type="GO" id="GO:0051537">
    <property type="term" value="F:2 iron, 2 sulfur cluster binding"/>
    <property type="evidence" value="ECO:0007669"/>
    <property type="project" value="UniProtKB-KW"/>
</dbReference>
<dbReference type="GO" id="GO:0051539">
    <property type="term" value="F:4 iron, 4 sulfur cluster binding"/>
    <property type="evidence" value="ECO:0007669"/>
    <property type="project" value="UniProtKB-KW"/>
</dbReference>
<dbReference type="GO" id="GO:0004076">
    <property type="term" value="F:biotin synthase activity"/>
    <property type="evidence" value="ECO:0007669"/>
    <property type="project" value="UniProtKB-UniRule"/>
</dbReference>
<dbReference type="GO" id="GO:0005506">
    <property type="term" value="F:iron ion binding"/>
    <property type="evidence" value="ECO:0007669"/>
    <property type="project" value="UniProtKB-UniRule"/>
</dbReference>
<dbReference type="GO" id="GO:0009102">
    <property type="term" value="P:biotin biosynthetic process"/>
    <property type="evidence" value="ECO:0007669"/>
    <property type="project" value="UniProtKB-UniRule"/>
</dbReference>
<dbReference type="CDD" id="cd01335">
    <property type="entry name" value="Radical_SAM"/>
    <property type="match status" value="1"/>
</dbReference>
<dbReference type="Gene3D" id="3.20.20.70">
    <property type="entry name" value="Aldolase class I"/>
    <property type="match status" value="1"/>
</dbReference>
<dbReference type="HAMAP" id="MF_01694">
    <property type="entry name" value="BioB"/>
    <property type="match status" value="1"/>
</dbReference>
<dbReference type="InterPro" id="IPR013785">
    <property type="entry name" value="Aldolase_TIM"/>
</dbReference>
<dbReference type="InterPro" id="IPR010722">
    <property type="entry name" value="BATS_dom"/>
</dbReference>
<dbReference type="InterPro" id="IPR002684">
    <property type="entry name" value="Biotin_synth/BioAB"/>
</dbReference>
<dbReference type="InterPro" id="IPR024177">
    <property type="entry name" value="Biotin_synthase"/>
</dbReference>
<dbReference type="InterPro" id="IPR006638">
    <property type="entry name" value="Elp3/MiaA/NifB-like_rSAM"/>
</dbReference>
<dbReference type="InterPro" id="IPR007197">
    <property type="entry name" value="rSAM"/>
</dbReference>
<dbReference type="NCBIfam" id="TIGR00433">
    <property type="entry name" value="bioB"/>
    <property type="match status" value="1"/>
</dbReference>
<dbReference type="PANTHER" id="PTHR22976">
    <property type="entry name" value="BIOTIN SYNTHASE"/>
    <property type="match status" value="1"/>
</dbReference>
<dbReference type="PANTHER" id="PTHR22976:SF2">
    <property type="entry name" value="BIOTIN SYNTHASE, MITOCHONDRIAL"/>
    <property type="match status" value="1"/>
</dbReference>
<dbReference type="Pfam" id="PF06968">
    <property type="entry name" value="BATS"/>
    <property type="match status" value="1"/>
</dbReference>
<dbReference type="Pfam" id="PF04055">
    <property type="entry name" value="Radical_SAM"/>
    <property type="match status" value="1"/>
</dbReference>
<dbReference type="PIRSF" id="PIRSF001619">
    <property type="entry name" value="Biotin_synth"/>
    <property type="match status" value="1"/>
</dbReference>
<dbReference type="SFLD" id="SFLDF00272">
    <property type="entry name" value="biotin_synthase"/>
    <property type="match status" value="1"/>
</dbReference>
<dbReference type="SFLD" id="SFLDS00029">
    <property type="entry name" value="Radical_SAM"/>
    <property type="match status" value="1"/>
</dbReference>
<dbReference type="SMART" id="SM00876">
    <property type="entry name" value="BATS"/>
    <property type="match status" value="1"/>
</dbReference>
<dbReference type="SMART" id="SM00729">
    <property type="entry name" value="Elp3"/>
    <property type="match status" value="1"/>
</dbReference>
<dbReference type="SUPFAM" id="SSF102114">
    <property type="entry name" value="Radical SAM enzymes"/>
    <property type="match status" value="1"/>
</dbReference>
<dbReference type="PROSITE" id="PS51918">
    <property type="entry name" value="RADICAL_SAM"/>
    <property type="match status" value="1"/>
</dbReference>
<evidence type="ECO:0000255" key="1">
    <source>
        <dbReference type="HAMAP-Rule" id="MF_01694"/>
    </source>
</evidence>
<evidence type="ECO:0000255" key="2">
    <source>
        <dbReference type="PROSITE-ProRule" id="PRU01266"/>
    </source>
</evidence>
<accession>Q8YVQ3</accession>
<gene>
    <name evidence="1" type="primary">bioB</name>
    <name type="ordered locus">alr1921</name>
</gene>
<reference key="1">
    <citation type="journal article" date="2001" name="DNA Res.">
        <title>Complete genomic sequence of the filamentous nitrogen-fixing cyanobacterium Anabaena sp. strain PCC 7120.</title>
        <authorList>
            <person name="Kaneko T."/>
            <person name="Nakamura Y."/>
            <person name="Wolk C.P."/>
            <person name="Kuritz T."/>
            <person name="Sasamoto S."/>
            <person name="Watanabe A."/>
            <person name="Iriguchi M."/>
            <person name="Ishikawa A."/>
            <person name="Kawashima K."/>
            <person name="Kimura T."/>
            <person name="Kishida Y."/>
            <person name="Kohara M."/>
            <person name="Matsumoto M."/>
            <person name="Matsuno A."/>
            <person name="Muraki A."/>
            <person name="Nakazaki N."/>
            <person name="Shimpo S."/>
            <person name="Sugimoto M."/>
            <person name="Takazawa M."/>
            <person name="Yamada M."/>
            <person name="Yasuda M."/>
            <person name="Tabata S."/>
        </authorList>
    </citation>
    <scope>NUCLEOTIDE SEQUENCE [LARGE SCALE GENOMIC DNA]</scope>
    <source>
        <strain>PCC 7120 / SAG 25.82 / UTEX 2576</strain>
    </source>
</reference>
<comment type="function">
    <text evidence="1">Catalyzes the conversion of dethiobiotin (DTB) to biotin by the insertion of a sulfur atom into dethiobiotin via a radical-based mechanism.</text>
</comment>
<comment type="catalytic activity">
    <reaction evidence="1">
        <text>(4R,5S)-dethiobiotin + (sulfur carrier)-SH + 2 reduced [2Fe-2S]-[ferredoxin] + 2 S-adenosyl-L-methionine = (sulfur carrier)-H + biotin + 2 5'-deoxyadenosine + 2 L-methionine + 2 oxidized [2Fe-2S]-[ferredoxin]</text>
        <dbReference type="Rhea" id="RHEA:22060"/>
        <dbReference type="Rhea" id="RHEA-COMP:10000"/>
        <dbReference type="Rhea" id="RHEA-COMP:10001"/>
        <dbReference type="Rhea" id="RHEA-COMP:14737"/>
        <dbReference type="Rhea" id="RHEA-COMP:14739"/>
        <dbReference type="ChEBI" id="CHEBI:17319"/>
        <dbReference type="ChEBI" id="CHEBI:29917"/>
        <dbReference type="ChEBI" id="CHEBI:33737"/>
        <dbReference type="ChEBI" id="CHEBI:33738"/>
        <dbReference type="ChEBI" id="CHEBI:57586"/>
        <dbReference type="ChEBI" id="CHEBI:57844"/>
        <dbReference type="ChEBI" id="CHEBI:59789"/>
        <dbReference type="ChEBI" id="CHEBI:64428"/>
        <dbReference type="ChEBI" id="CHEBI:149473"/>
        <dbReference type="EC" id="2.8.1.6"/>
    </reaction>
</comment>
<comment type="cofactor">
    <cofactor evidence="1">
        <name>[4Fe-4S] cluster</name>
        <dbReference type="ChEBI" id="CHEBI:49883"/>
    </cofactor>
    <text evidence="1">Binds 1 [4Fe-4S] cluster. The cluster is coordinated with 3 cysteines and an exchangeable S-adenosyl-L-methionine.</text>
</comment>
<comment type="cofactor">
    <cofactor evidence="1">
        <name>[2Fe-2S] cluster</name>
        <dbReference type="ChEBI" id="CHEBI:190135"/>
    </cofactor>
    <text evidence="1">Binds 1 [2Fe-2S] cluster. The cluster is coordinated with 3 cysteines and 1 arginine.</text>
</comment>
<comment type="pathway">
    <text evidence="1">Cofactor biosynthesis; biotin biosynthesis; biotin from 7,8-diaminononanoate: step 2/2.</text>
</comment>
<comment type="subunit">
    <text evidence="1">Homodimer.</text>
</comment>
<comment type="similarity">
    <text evidence="1">Belongs to the radical SAM superfamily. Biotin synthase family.</text>
</comment>